<protein>
    <recommendedName>
        <fullName>Uncharacterized protein YnaC</fullName>
    </recommendedName>
</protein>
<dbReference type="EMBL" id="U66480">
    <property type="protein sequence ID" value="AAB41083.1"/>
    <property type="molecule type" value="Genomic_DNA"/>
</dbReference>
<dbReference type="EMBL" id="AL009126">
    <property type="protein sequence ID" value="CAB13635.1"/>
    <property type="molecule type" value="Genomic_DNA"/>
</dbReference>
<dbReference type="PIR" id="C69887">
    <property type="entry name" value="C69887"/>
</dbReference>
<dbReference type="RefSeq" id="NP_389633.1">
    <property type="nucleotide sequence ID" value="NC_000964.3"/>
</dbReference>
<dbReference type="RefSeq" id="WP_003245212.1">
    <property type="nucleotide sequence ID" value="NZ_OZ025638.1"/>
</dbReference>
<dbReference type="FunCoup" id="P94481">
    <property type="interactions" value="46"/>
</dbReference>
<dbReference type="STRING" id="224308.BSU17510"/>
<dbReference type="PaxDb" id="224308-BSU17510"/>
<dbReference type="EnsemblBacteria" id="CAB13635">
    <property type="protein sequence ID" value="CAB13635"/>
    <property type="gene ID" value="BSU_17510"/>
</dbReference>
<dbReference type="GeneID" id="936647"/>
<dbReference type="KEGG" id="bsu:BSU17510"/>
<dbReference type="PATRIC" id="fig|224308.179.peg.1899"/>
<dbReference type="eggNOG" id="ENOG50333ED">
    <property type="taxonomic scope" value="Bacteria"/>
</dbReference>
<dbReference type="InParanoid" id="P94481"/>
<dbReference type="OrthoDB" id="7221045at2"/>
<dbReference type="BioCyc" id="BSUB:BSU17510-MONOMER"/>
<dbReference type="Proteomes" id="UP000001570">
    <property type="component" value="Chromosome"/>
</dbReference>
<dbReference type="InterPro" id="IPR054267">
    <property type="entry name" value="DUF6998"/>
</dbReference>
<dbReference type="InterPro" id="IPR055649">
    <property type="entry name" value="DUF7225"/>
</dbReference>
<dbReference type="Pfam" id="PF22522">
    <property type="entry name" value="DUF6998"/>
    <property type="match status" value="1"/>
</dbReference>
<dbReference type="Pfam" id="PF23870">
    <property type="entry name" value="DUF7225"/>
    <property type="match status" value="1"/>
</dbReference>
<proteinExistence type="predicted"/>
<name>YNAC_BACSU</name>
<organism>
    <name type="scientific">Bacillus subtilis (strain 168)</name>
    <dbReference type="NCBI Taxonomy" id="224308"/>
    <lineage>
        <taxon>Bacteria</taxon>
        <taxon>Bacillati</taxon>
        <taxon>Bacillota</taxon>
        <taxon>Bacilli</taxon>
        <taxon>Bacillales</taxon>
        <taxon>Bacillaceae</taxon>
        <taxon>Bacillus</taxon>
    </lineage>
</organism>
<feature type="chain" id="PRO_0000049639" description="Uncharacterized protein YnaC">
    <location>
        <begin position="1"/>
        <end position="263"/>
    </location>
</feature>
<reference key="1">
    <citation type="submission" date="1997-02" db="EMBL/GenBank/DDBJ databases">
        <title>Sequencing of a 26 kb region of the Bacillus subtilis genome downstream of spoVJ.</title>
        <authorList>
            <person name="Borchert S."/>
            <person name="Klein C."/>
            <person name="Piksa B."/>
            <person name="Hammelmann M."/>
            <person name="Entian K.-D."/>
        </authorList>
    </citation>
    <scope>NUCLEOTIDE SEQUENCE [GENOMIC DNA]</scope>
</reference>
<reference key="2">
    <citation type="journal article" date="1997" name="Nature">
        <title>The complete genome sequence of the Gram-positive bacterium Bacillus subtilis.</title>
        <authorList>
            <person name="Kunst F."/>
            <person name="Ogasawara N."/>
            <person name="Moszer I."/>
            <person name="Albertini A.M."/>
            <person name="Alloni G."/>
            <person name="Azevedo V."/>
            <person name="Bertero M.G."/>
            <person name="Bessieres P."/>
            <person name="Bolotin A."/>
            <person name="Borchert S."/>
            <person name="Borriss R."/>
            <person name="Boursier L."/>
            <person name="Brans A."/>
            <person name="Braun M."/>
            <person name="Brignell S.C."/>
            <person name="Bron S."/>
            <person name="Brouillet S."/>
            <person name="Bruschi C.V."/>
            <person name="Caldwell B."/>
            <person name="Capuano V."/>
            <person name="Carter N.M."/>
            <person name="Choi S.-K."/>
            <person name="Codani J.-J."/>
            <person name="Connerton I.F."/>
            <person name="Cummings N.J."/>
            <person name="Daniel R.A."/>
            <person name="Denizot F."/>
            <person name="Devine K.M."/>
            <person name="Duesterhoeft A."/>
            <person name="Ehrlich S.D."/>
            <person name="Emmerson P.T."/>
            <person name="Entian K.-D."/>
            <person name="Errington J."/>
            <person name="Fabret C."/>
            <person name="Ferrari E."/>
            <person name="Foulger D."/>
            <person name="Fritz C."/>
            <person name="Fujita M."/>
            <person name="Fujita Y."/>
            <person name="Fuma S."/>
            <person name="Galizzi A."/>
            <person name="Galleron N."/>
            <person name="Ghim S.-Y."/>
            <person name="Glaser P."/>
            <person name="Goffeau A."/>
            <person name="Golightly E.J."/>
            <person name="Grandi G."/>
            <person name="Guiseppi G."/>
            <person name="Guy B.J."/>
            <person name="Haga K."/>
            <person name="Haiech J."/>
            <person name="Harwood C.R."/>
            <person name="Henaut A."/>
            <person name="Hilbert H."/>
            <person name="Holsappel S."/>
            <person name="Hosono S."/>
            <person name="Hullo M.-F."/>
            <person name="Itaya M."/>
            <person name="Jones L.-M."/>
            <person name="Joris B."/>
            <person name="Karamata D."/>
            <person name="Kasahara Y."/>
            <person name="Klaerr-Blanchard M."/>
            <person name="Klein C."/>
            <person name="Kobayashi Y."/>
            <person name="Koetter P."/>
            <person name="Koningstein G."/>
            <person name="Krogh S."/>
            <person name="Kumano M."/>
            <person name="Kurita K."/>
            <person name="Lapidus A."/>
            <person name="Lardinois S."/>
            <person name="Lauber J."/>
            <person name="Lazarevic V."/>
            <person name="Lee S.-M."/>
            <person name="Levine A."/>
            <person name="Liu H."/>
            <person name="Masuda S."/>
            <person name="Mauel C."/>
            <person name="Medigue C."/>
            <person name="Medina N."/>
            <person name="Mellado R.P."/>
            <person name="Mizuno M."/>
            <person name="Moestl D."/>
            <person name="Nakai S."/>
            <person name="Noback M."/>
            <person name="Noone D."/>
            <person name="O'Reilly M."/>
            <person name="Ogawa K."/>
            <person name="Ogiwara A."/>
            <person name="Oudega B."/>
            <person name="Park S.-H."/>
            <person name="Parro V."/>
            <person name="Pohl T.M."/>
            <person name="Portetelle D."/>
            <person name="Porwollik S."/>
            <person name="Prescott A.M."/>
            <person name="Presecan E."/>
            <person name="Pujic P."/>
            <person name="Purnelle B."/>
            <person name="Rapoport G."/>
            <person name="Rey M."/>
            <person name="Reynolds S."/>
            <person name="Rieger M."/>
            <person name="Rivolta C."/>
            <person name="Rocha E."/>
            <person name="Roche B."/>
            <person name="Rose M."/>
            <person name="Sadaie Y."/>
            <person name="Sato T."/>
            <person name="Scanlan E."/>
            <person name="Schleich S."/>
            <person name="Schroeter R."/>
            <person name="Scoffone F."/>
            <person name="Sekiguchi J."/>
            <person name="Sekowska A."/>
            <person name="Seror S.J."/>
            <person name="Serror P."/>
            <person name="Shin B.-S."/>
            <person name="Soldo B."/>
            <person name="Sorokin A."/>
            <person name="Tacconi E."/>
            <person name="Takagi T."/>
            <person name="Takahashi H."/>
            <person name="Takemaru K."/>
            <person name="Takeuchi M."/>
            <person name="Tamakoshi A."/>
            <person name="Tanaka T."/>
            <person name="Terpstra P."/>
            <person name="Tognoni A."/>
            <person name="Tosato V."/>
            <person name="Uchiyama S."/>
            <person name="Vandenbol M."/>
            <person name="Vannier F."/>
            <person name="Vassarotti A."/>
            <person name="Viari A."/>
            <person name="Wambutt R."/>
            <person name="Wedler E."/>
            <person name="Wedler H."/>
            <person name="Weitzenegger T."/>
            <person name="Winters P."/>
            <person name="Wipat A."/>
            <person name="Yamamoto H."/>
            <person name="Yamane K."/>
            <person name="Yasumoto K."/>
            <person name="Yata K."/>
            <person name="Yoshida K."/>
            <person name="Yoshikawa H.-F."/>
            <person name="Zumstein E."/>
            <person name="Yoshikawa H."/>
            <person name="Danchin A."/>
        </authorList>
    </citation>
    <scope>NUCLEOTIDE SEQUENCE [LARGE SCALE GENOMIC DNA]</scope>
    <source>
        <strain>168</strain>
    </source>
</reference>
<accession>P94481</accession>
<keyword id="KW-1185">Reference proteome</keyword>
<sequence length="263" mass="30604">MTIYEQIKDALKNKINELVSPQEVKKTLQEKYGTNPDSIILSDYCYNRYNKGISFNKHLFEYMNRSSYKYLGENSLYTGLIFRKSKGEDKEVIVGEWVNGVKSLREASVTNNQINDQAEIISKEQLVNLYNEYNQILRYEMNVLNCKPTELRHLIGRIGEFICAIQTNGTLARQTNQHGFDVVSDGRRISVKTTAQSSGFISINKNTFYDFDDFFVVQYVNDDFKVIFFGSKEEVQKISRIYGSQYEVEISLLKKLNKEYQLN</sequence>
<gene>
    <name type="primary">ynaC</name>
    <name type="ordered locus">BSU17510</name>
</gene>